<organism>
    <name type="scientific">Agrobacterium tumefaciens (strain Ach5)</name>
    <dbReference type="NCBI Taxonomy" id="176298"/>
    <lineage>
        <taxon>Bacteria</taxon>
        <taxon>Pseudomonadati</taxon>
        <taxon>Pseudomonadota</taxon>
        <taxon>Alphaproteobacteria</taxon>
        <taxon>Hyphomicrobiales</taxon>
        <taxon>Rhizobiaceae</taxon>
        <taxon>Rhizobium/Agrobacterium group</taxon>
        <taxon>Agrobacterium</taxon>
        <taxon>Agrobacterium tumefaciens complex</taxon>
    </lineage>
</organism>
<proteinExistence type="inferred from homology"/>
<dbReference type="EMBL" id="Z30328">
    <property type="protein sequence ID" value="CAA82985.1"/>
    <property type="molecule type" value="Genomic_DNA"/>
</dbReference>
<dbReference type="RefSeq" id="NP_059712.1">
    <property type="nucleotide sequence ID" value="NC_002377.1"/>
</dbReference>
<dbReference type="SMR" id="P0A2V3"/>
<dbReference type="GO" id="GO:0005886">
    <property type="term" value="C:plasma membrane"/>
    <property type="evidence" value="ECO:0007669"/>
    <property type="project" value="UniProtKB-SubCell"/>
</dbReference>
<dbReference type="GO" id="GO:0015424">
    <property type="term" value="F:ABC-type amino acid transporter activity"/>
    <property type="evidence" value="ECO:0007669"/>
    <property type="project" value="InterPro"/>
</dbReference>
<dbReference type="GO" id="GO:0005524">
    <property type="term" value="F:ATP binding"/>
    <property type="evidence" value="ECO:0007669"/>
    <property type="project" value="UniProtKB-KW"/>
</dbReference>
<dbReference type="GO" id="GO:0016887">
    <property type="term" value="F:ATP hydrolysis activity"/>
    <property type="evidence" value="ECO:0007669"/>
    <property type="project" value="InterPro"/>
</dbReference>
<dbReference type="CDD" id="cd03262">
    <property type="entry name" value="ABC_HisP_GlnQ"/>
    <property type="match status" value="1"/>
</dbReference>
<dbReference type="FunFam" id="3.40.50.300:FF:000020">
    <property type="entry name" value="Amino acid ABC transporter ATP-binding component"/>
    <property type="match status" value="1"/>
</dbReference>
<dbReference type="Gene3D" id="3.40.50.300">
    <property type="entry name" value="P-loop containing nucleotide triphosphate hydrolases"/>
    <property type="match status" value="1"/>
</dbReference>
<dbReference type="InterPro" id="IPR003593">
    <property type="entry name" value="AAA+_ATPase"/>
</dbReference>
<dbReference type="InterPro" id="IPR030679">
    <property type="entry name" value="ABC_ATPase_HisP-typ"/>
</dbReference>
<dbReference type="InterPro" id="IPR003439">
    <property type="entry name" value="ABC_transporter-like_ATP-bd"/>
</dbReference>
<dbReference type="InterPro" id="IPR017871">
    <property type="entry name" value="ABC_transporter-like_CS"/>
</dbReference>
<dbReference type="InterPro" id="IPR050086">
    <property type="entry name" value="MetN_ABC_transporter-like"/>
</dbReference>
<dbReference type="InterPro" id="IPR027417">
    <property type="entry name" value="P-loop_NTPase"/>
</dbReference>
<dbReference type="PANTHER" id="PTHR43166">
    <property type="entry name" value="AMINO ACID IMPORT ATP-BINDING PROTEIN"/>
    <property type="match status" value="1"/>
</dbReference>
<dbReference type="PANTHER" id="PTHR43166:SF35">
    <property type="entry name" value="L-CYSTINE IMPORT ATP-BINDING PROTEIN TCYN"/>
    <property type="match status" value="1"/>
</dbReference>
<dbReference type="Pfam" id="PF00005">
    <property type="entry name" value="ABC_tran"/>
    <property type="match status" value="1"/>
</dbReference>
<dbReference type="PIRSF" id="PIRSF039085">
    <property type="entry name" value="ABC_ATPase_HisP"/>
    <property type="match status" value="1"/>
</dbReference>
<dbReference type="SMART" id="SM00382">
    <property type="entry name" value="AAA"/>
    <property type="match status" value="1"/>
</dbReference>
<dbReference type="SUPFAM" id="SSF52540">
    <property type="entry name" value="P-loop containing nucleoside triphosphate hydrolases"/>
    <property type="match status" value="1"/>
</dbReference>
<dbReference type="PROSITE" id="PS00211">
    <property type="entry name" value="ABC_TRANSPORTER_1"/>
    <property type="match status" value="1"/>
</dbReference>
<dbReference type="PROSITE" id="PS50893">
    <property type="entry name" value="ABC_TRANSPORTER_2"/>
    <property type="match status" value="1"/>
</dbReference>
<reference key="1">
    <citation type="book" date="1992" name="Guanidino compounds in biology and medicine">
        <title>Catabolism of the guanidino compounds nopaline, octopine, and L-arginine in Agrobacterium tumefaciens: enzymes, genes, and regulation.</title>
        <editorList>
            <person name="De Deyn P.P."/>
            <person name="Marescau B."/>
            <person name="Stalon V."/>
            <person name="Qureshi I.A."/>
        </editorList>
        <authorList>
            <person name="Schroeder J."/>
            <person name="von Lintig J."/>
            <person name="Zanker H."/>
        </authorList>
    </citation>
    <scope>NUCLEOTIDE SEQUENCE [GENOMIC DNA]</scope>
</reference>
<gene>
    <name type="primary">occP</name>
</gene>
<comment type="function">
    <text evidence="1">Component of the octopine active transport system probably consisting of four subunits: Q, M, P and T.</text>
</comment>
<comment type="subcellular location">
    <subcellularLocation>
        <location evidence="3">Cell inner membrane</location>
        <topology evidence="3">Peripheral membrane protein</topology>
    </subcellularLocation>
</comment>
<comment type="induction">
    <text evidence="1">By octopine.</text>
</comment>
<comment type="similarity">
    <text evidence="3">Belongs to the ABC transporter superfamily.</text>
</comment>
<sequence>MPNPVRPAVQLKDIRKNFGNLEVLHGVSLSANEGEVISILGSSGSGKSTLLRCVNMLEVPNAGSVAIMGEEIALEHRAGRLARPKDLKQVNRLRERAAMVFQGFNLWSHQTILQNVMEAPVHVQGRDRKACRDEAEALLERVGIASKRDAYPSELSGGQQQRAAIARALAMRPDVMLFDEPTSALDPELVGEVLKVMRDLAAEGRTMLIVTHEMDFARDVSSRTVFLHQGVIAEEGPSSEMFAHPRTDRFRQFLRRDGGTSH</sequence>
<protein>
    <recommendedName>
        <fullName>Octopine permease ATP-binding protein P</fullName>
    </recommendedName>
</protein>
<name>OCCP_AGRT4</name>
<feature type="chain" id="PRO_0000092650" description="Octopine permease ATP-binding protein P">
    <location>
        <begin position="1"/>
        <end position="262"/>
    </location>
</feature>
<feature type="domain" description="ABC transporter" evidence="2">
    <location>
        <begin position="9"/>
        <end position="254"/>
    </location>
</feature>
<feature type="binding site" evidence="2">
    <location>
        <begin position="41"/>
        <end position="48"/>
    </location>
    <ligand>
        <name>ATP</name>
        <dbReference type="ChEBI" id="CHEBI:30616"/>
    </ligand>
</feature>
<keyword id="KW-0067">ATP-binding</keyword>
<keyword id="KW-0997">Cell inner membrane</keyword>
<keyword id="KW-1003">Cell membrane</keyword>
<keyword id="KW-0472">Membrane</keyword>
<keyword id="KW-0547">Nucleotide-binding</keyword>
<keyword id="KW-0614">Plasmid</keyword>
<keyword id="KW-0813">Transport</keyword>
<geneLocation type="plasmid">
    <name>pTiAch5</name>
</geneLocation>
<evidence type="ECO:0000250" key="1"/>
<evidence type="ECO:0000255" key="2">
    <source>
        <dbReference type="PROSITE-ProRule" id="PRU00434"/>
    </source>
</evidence>
<evidence type="ECO:0000305" key="3"/>
<accession>P0A2V3</accession>
<accession>P35117</accession>